<sequence length="225" mass="25529">MMYHIPGVLSPQDVARFREQLEQAEWVDGRVTTGAQGAQVKNNQQVDTRSTLYAALQNEVLNAVNQHALFFAAALPRTLSTPLFNRYQNNETYGFHVDGAVRSHPQNGWMRTDLSATLFLSDPQSYDGGELVVNDTFGQHRVKLPAGDLVLYPSSSLHCVTPVTRGVRVASFMWIQSMIRDDKKRAMLFELDNNIQSLKSRYGESEEILSLLNLYHNLLREWSEI</sequence>
<comment type="cofactor">
    <cofactor evidence="1">
        <name>Fe(2+)</name>
        <dbReference type="ChEBI" id="CHEBI:29033"/>
    </cofactor>
    <text evidence="1">Binds 1 Fe(2+) ion per subunit.</text>
</comment>
<comment type="cofactor">
    <cofactor evidence="1">
        <name>L-ascorbate</name>
        <dbReference type="ChEBI" id="CHEBI:38290"/>
    </cofactor>
</comment>
<organism>
    <name type="scientific">Escherichia coli O9:H4 (strain HS)</name>
    <dbReference type="NCBI Taxonomy" id="331112"/>
    <lineage>
        <taxon>Bacteria</taxon>
        <taxon>Pseudomonadati</taxon>
        <taxon>Pseudomonadota</taxon>
        <taxon>Gammaproteobacteria</taxon>
        <taxon>Enterobacterales</taxon>
        <taxon>Enterobacteriaceae</taxon>
        <taxon>Escherichia</taxon>
    </lineage>
</organism>
<reference key="1">
    <citation type="journal article" date="2008" name="J. Bacteriol.">
        <title>The pangenome structure of Escherichia coli: comparative genomic analysis of E. coli commensal and pathogenic isolates.</title>
        <authorList>
            <person name="Rasko D.A."/>
            <person name="Rosovitz M.J."/>
            <person name="Myers G.S.A."/>
            <person name="Mongodin E.F."/>
            <person name="Fricke W.F."/>
            <person name="Gajer P."/>
            <person name="Crabtree J."/>
            <person name="Sebaihia M."/>
            <person name="Thomson N.R."/>
            <person name="Chaudhuri R."/>
            <person name="Henderson I.R."/>
            <person name="Sperandio V."/>
            <person name="Ravel J."/>
        </authorList>
    </citation>
    <scope>NUCLEOTIDE SEQUENCE [LARGE SCALE GENOMIC DNA]</scope>
    <source>
        <strain>HS</strain>
    </source>
</reference>
<gene>
    <name evidence="1" type="primary">ybiX</name>
    <name type="ordered locus">EcHS_A0859</name>
</gene>
<name>YBIX_ECOHS</name>
<proteinExistence type="inferred from homology"/>
<protein>
    <recommendedName>
        <fullName evidence="1">PKHD-type hydroxylase YbiX</fullName>
        <ecNumber evidence="1">1.14.11.-</ecNumber>
    </recommendedName>
</protein>
<accession>A7ZY61</accession>
<feature type="chain" id="PRO_1000061718" description="PKHD-type hydroxylase YbiX">
    <location>
        <begin position="1"/>
        <end position="225"/>
    </location>
</feature>
<feature type="domain" description="Fe2OG dioxygenase" evidence="1">
    <location>
        <begin position="78"/>
        <end position="177"/>
    </location>
</feature>
<feature type="binding site" evidence="1">
    <location>
        <position position="96"/>
    </location>
    <ligand>
        <name>Fe cation</name>
        <dbReference type="ChEBI" id="CHEBI:24875"/>
    </ligand>
</feature>
<feature type="binding site" evidence="1">
    <location>
        <position position="98"/>
    </location>
    <ligand>
        <name>Fe cation</name>
        <dbReference type="ChEBI" id="CHEBI:24875"/>
    </ligand>
</feature>
<feature type="binding site" evidence="1">
    <location>
        <position position="158"/>
    </location>
    <ligand>
        <name>Fe cation</name>
        <dbReference type="ChEBI" id="CHEBI:24875"/>
    </ligand>
</feature>
<feature type="binding site" evidence="1">
    <location>
        <position position="168"/>
    </location>
    <ligand>
        <name>2-oxoglutarate</name>
        <dbReference type="ChEBI" id="CHEBI:16810"/>
    </ligand>
</feature>
<dbReference type="EC" id="1.14.11.-" evidence="1"/>
<dbReference type="EMBL" id="CP000802">
    <property type="protein sequence ID" value="ABV05215.1"/>
    <property type="molecule type" value="Genomic_DNA"/>
</dbReference>
<dbReference type="RefSeq" id="WP_000990177.1">
    <property type="nucleotide sequence ID" value="NC_009800.1"/>
</dbReference>
<dbReference type="SMR" id="A7ZY61"/>
<dbReference type="KEGG" id="ecx:EcHS_A0859"/>
<dbReference type="HOGENOM" id="CLU_106663_0_0_6"/>
<dbReference type="GO" id="GO:0016706">
    <property type="term" value="F:2-oxoglutarate-dependent dioxygenase activity"/>
    <property type="evidence" value="ECO:0007669"/>
    <property type="project" value="UniProtKB-UniRule"/>
</dbReference>
<dbReference type="GO" id="GO:0005506">
    <property type="term" value="F:iron ion binding"/>
    <property type="evidence" value="ECO:0007669"/>
    <property type="project" value="UniProtKB-UniRule"/>
</dbReference>
<dbReference type="GO" id="GO:0031418">
    <property type="term" value="F:L-ascorbic acid binding"/>
    <property type="evidence" value="ECO:0007669"/>
    <property type="project" value="UniProtKB-KW"/>
</dbReference>
<dbReference type="GO" id="GO:0006974">
    <property type="term" value="P:DNA damage response"/>
    <property type="evidence" value="ECO:0007669"/>
    <property type="project" value="TreeGrafter"/>
</dbReference>
<dbReference type="GO" id="GO:0006879">
    <property type="term" value="P:intracellular iron ion homeostasis"/>
    <property type="evidence" value="ECO:0007669"/>
    <property type="project" value="TreeGrafter"/>
</dbReference>
<dbReference type="FunFam" id="2.60.120.620:FF:000006">
    <property type="entry name" value="PKHD-type hydroxylase YbiX"/>
    <property type="match status" value="1"/>
</dbReference>
<dbReference type="FunFam" id="4.10.860.20:FF:000001">
    <property type="entry name" value="PKHD-type hydroxylase YbiX"/>
    <property type="match status" value="1"/>
</dbReference>
<dbReference type="Gene3D" id="2.60.120.620">
    <property type="entry name" value="q2cbj1_9rhob like domain"/>
    <property type="match status" value="1"/>
</dbReference>
<dbReference type="Gene3D" id="4.10.860.20">
    <property type="entry name" value="Rabenosyn, Rab binding domain"/>
    <property type="match status" value="1"/>
</dbReference>
<dbReference type="HAMAP" id="MF_00657">
    <property type="entry name" value="Hydroxyl_YbiX"/>
    <property type="match status" value="1"/>
</dbReference>
<dbReference type="InterPro" id="IPR005123">
    <property type="entry name" value="Oxoglu/Fe-dep_dioxygenase_dom"/>
</dbReference>
<dbReference type="InterPro" id="IPR041097">
    <property type="entry name" value="PKHD_C"/>
</dbReference>
<dbReference type="InterPro" id="IPR023550">
    <property type="entry name" value="PKHD_hydroxylase"/>
</dbReference>
<dbReference type="InterPro" id="IPR006620">
    <property type="entry name" value="Pro_4_hyd_alph"/>
</dbReference>
<dbReference type="InterPro" id="IPR044862">
    <property type="entry name" value="Pro_4_hyd_alph_FE2OG_OXY"/>
</dbReference>
<dbReference type="NCBIfam" id="NF003972">
    <property type="entry name" value="PRK05467.1-1"/>
    <property type="match status" value="1"/>
</dbReference>
<dbReference type="NCBIfam" id="NF003974">
    <property type="entry name" value="PRK05467.1-3"/>
    <property type="match status" value="1"/>
</dbReference>
<dbReference type="NCBIfam" id="NF003975">
    <property type="entry name" value="PRK05467.1-4"/>
    <property type="match status" value="1"/>
</dbReference>
<dbReference type="PANTHER" id="PTHR41536">
    <property type="entry name" value="PKHD-TYPE HYDROXYLASE YBIX"/>
    <property type="match status" value="1"/>
</dbReference>
<dbReference type="PANTHER" id="PTHR41536:SF1">
    <property type="entry name" value="PKHD-TYPE HYDROXYLASE YBIX"/>
    <property type="match status" value="1"/>
</dbReference>
<dbReference type="Pfam" id="PF13640">
    <property type="entry name" value="2OG-FeII_Oxy_3"/>
    <property type="match status" value="1"/>
</dbReference>
<dbReference type="Pfam" id="PF18331">
    <property type="entry name" value="PKHD_C"/>
    <property type="match status" value="1"/>
</dbReference>
<dbReference type="SMART" id="SM00702">
    <property type="entry name" value="P4Hc"/>
    <property type="match status" value="1"/>
</dbReference>
<dbReference type="SUPFAM" id="SSF51197">
    <property type="entry name" value="Clavaminate synthase-like"/>
    <property type="match status" value="1"/>
</dbReference>
<dbReference type="PROSITE" id="PS51471">
    <property type="entry name" value="FE2OG_OXY"/>
    <property type="match status" value="1"/>
</dbReference>
<evidence type="ECO:0000255" key="1">
    <source>
        <dbReference type="HAMAP-Rule" id="MF_00657"/>
    </source>
</evidence>
<keyword id="KW-0223">Dioxygenase</keyword>
<keyword id="KW-0408">Iron</keyword>
<keyword id="KW-0479">Metal-binding</keyword>
<keyword id="KW-0560">Oxidoreductase</keyword>
<keyword id="KW-0847">Vitamin C</keyword>